<proteinExistence type="inferred from homology"/>
<accession>B0SQX5</accession>
<evidence type="ECO:0000255" key="1">
    <source>
        <dbReference type="HAMAP-Rule" id="MF_00098"/>
    </source>
</evidence>
<evidence type="ECO:0000256" key="2">
    <source>
        <dbReference type="SAM" id="MobiDB-lite"/>
    </source>
</evidence>
<protein>
    <recommendedName>
        <fullName evidence="1">Methionine--tRNA ligase</fullName>
        <ecNumber evidence="1">6.1.1.10</ecNumber>
    </recommendedName>
    <alternativeName>
        <fullName evidence="1">Methionyl-tRNA synthetase</fullName>
        <shortName evidence="1">MetRS</shortName>
    </alternativeName>
</protein>
<comment type="function">
    <text evidence="1">Is required not only for elongation of protein synthesis but also for the initiation of all mRNA translation through initiator tRNA(fMet) aminoacylation.</text>
</comment>
<comment type="catalytic activity">
    <reaction evidence="1">
        <text>tRNA(Met) + L-methionine + ATP = L-methionyl-tRNA(Met) + AMP + diphosphate</text>
        <dbReference type="Rhea" id="RHEA:13481"/>
        <dbReference type="Rhea" id="RHEA-COMP:9667"/>
        <dbReference type="Rhea" id="RHEA-COMP:9698"/>
        <dbReference type="ChEBI" id="CHEBI:30616"/>
        <dbReference type="ChEBI" id="CHEBI:33019"/>
        <dbReference type="ChEBI" id="CHEBI:57844"/>
        <dbReference type="ChEBI" id="CHEBI:78442"/>
        <dbReference type="ChEBI" id="CHEBI:78530"/>
        <dbReference type="ChEBI" id="CHEBI:456215"/>
        <dbReference type="EC" id="6.1.1.10"/>
    </reaction>
</comment>
<comment type="cofactor">
    <cofactor evidence="1">
        <name>Zn(2+)</name>
        <dbReference type="ChEBI" id="CHEBI:29105"/>
    </cofactor>
    <text evidence="1">Binds 1 zinc ion per subunit.</text>
</comment>
<comment type="subunit">
    <text evidence="1">Homodimer.</text>
</comment>
<comment type="subcellular location">
    <subcellularLocation>
        <location evidence="1">Cytoplasm</location>
    </subcellularLocation>
</comment>
<comment type="similarity">
    <text evidence="1">Belongs to the class-I aminoacyl-tRNA synthetase family. MetG type 1 subfamily.</text>
</comment>
<feature type="chain" id="PRO_1000093719" description="Methionine--tRNA ligase">
    <location>
        <begin position="1"/>
        <end position="681"/>
    </location>
</feature>
<feature type="domain" description="tRNA-binding" evidence="1">
    <location>
        <begin position="580"/>
        <end position="681"/>
    </location>
</feature>
<feature type="region of interest" description="Disordered" evidence="2">
    <location>
        <begin position="545"/>
        <end position="566"/>
    </location>
</feature>
<feature type="short sequence motif" description="'HIGH' region">
    <location>
        <begin position="12"/>
        <end position="22"/>
    </location>
</feature>
<feature type="short sequence motif" description="'KMSKS' region">
    <location>
        <begin position="327"/>
        <end position="331"/>
    </location>
</feature>
<feature type="compositionally biased region" description="Basic and acidic residues" evidence="2">
    <location>
        <begin position="545"/>
        <end position="557"/>
    </location>
</feature>
<feature type="binding site" evidence="1">
    <location>
        <position position="143"/>
    </location>
    <ligand>
        <name>Zn(2+)</name>
        <dbReference type="ChEBI" id="CHEBI:29105"/>
    </ligand>
</feature>
<feature type="binding site" evidence="1">
    <location>
        <position position="146"/>
    </location>
    <ligand>
        <name>Zn(2+)</name>
        <dbReference type="ChEBI" id="CHEBI:29105"/>
    </ligand>
</feature>
<feature type="binding site" evidence="1">
    <location>
        <position position="156"/>
    </location>
    <ligand>
        <name>Zn(2+)</name>
        <dbReference type="ChEBI" id="CHEBI:29105"/>
    </ligand>
</feature>
<feature type="binding site" evidence="1">
    <location>
        <position position="159"/>
    </location>
    <ligand>
        <name>Zn(2+)</name>
        <dbReference type="ChEBI" id="CHEBI:29105"/>
    </ligand>
</feature>
<feature type="binding site" evidence="1">
    <location>
        <position position="330"/>
    </location>
    <ligand>
        <name>ATP</name>
        <dbReference type="ChEBI" id="CHEBI:30616"/>
    </ligand>
</feature>
<reference key="1">
    <citation type="journal article" date="2008" name="PLoS ONE">
        <title>Genome sequence of the saprophyte Leptospira biflexa provides insights into the evolution of Leptospira and the pathogenesis of leptospirosis.</title>
        <authorList>
            <person name="Picardeau M."/>
            <person name="Bulach D.M."/>
            <person name="Bouchier C."/>
            <person name="Zuerner R.L."/>
            <person name="Zidane N."/>
            <person name="Wilson P.J."/>
            <person name="Creno S."/>
            <person name="Kuczek E.S."/>
            <person name="Bommezzadri S."/>
            <person name="Davis J.C."/>
            <person name="McGrath A."/>
            <person name="Johnson M.J."/>
            <person name="Boursaux-Eude C."/>
            <person name="Seemann T."/>
            <person name="Rouy Z."/>
            <person name="Coppel R.L."/>
            <person name="Rood J.I."/>
            <person name="Lajus A."/>
            <person name="Davies J.K."/>
            <person name="Medigue C."/>
            <person name="Adler B."/>
        </authorList>
    </citation>
    <scope>NUCLEOTIDE SEQUENCE [LARGE SCALE GENOMIC DNA]</scope>
    <source>
        <strain>Patoc 1 / ATCC 23582 / Paris</strain>
    </source>
</reference>
<dbReference type="EC" id="6.1.1.10" evidence="1"/>
<dbReference type="EMBL" id="CP000786">
    <property type="protein sequence ID" value="ABZ99372.1"/>
    <property type="molecule type" value="Genomic_DNA"/>
</dbReference>
<dbReference type="RefSeq" id="WP_012390228.1">
    <property type="nucleotide sequence ID" value="NC_010602.1"/>
</dbReference>
<dbReference type="SMR" id="B0SQX5"/>
<dbReference type="STRING" id="456481.LEPBI_I3307"/>
<dbReference type="KEGG" id="lbi:LEPBI_I3307"/>
<dbReference type="HOGENOM" id="CLU_009710_7_0_12"/>
<dbReference type="OrthoDB" id="9810191at2"/>
<dbReference type="BioCyc" id="LBIF456481:LEPBI_RS16200-MONOMER"/>
<dbReference type="Proteomes" id="UP000001847">
    <property type="component" value="Chromosome I"/>
</dbReference>
<dbReference type="GO" id="GO:0005829">
    <property type="term" value="C:cytosol"/>
    <property type="evidence" value="ECO:0007669"/>
    <property type="project" value="TreeGrafter"/>
</dbReference>
<dbReference type="GO" id="GO:0005524">
    <property type="term" value="F:ATP binding"/>
    <property type="evidence" value="ECO:0007669"/>
    <property type="project" value="UniProtKB-UniRule"/>
</dbReference>
<dbReference type="GO" id="GO:0046872">
    <property type="term" value="F:metal ion binding"/>
    <property type="evidence" value="ECO:0007669"/>
    <property type="project" value="UniProtKB-KW"/>
</dbReference>
<dbReference type="GO" id="GO:0004825">
    <property type="term" value="F:methionine-tRNA ligase activity"/>
    <property type="evidence" value="ECO:0007669"/>
    <property type="project" value="UniProtKB-UniRule"/>
</dbReference>
<dbReference type="GO" id="GO:0000049">
    <property type="term" value="F:tRNA binding"/>
    <property type="evidence" value="ECO:0007669"/>
    <property type="project" value="UniProtKB-KW"/>
</dbReference>
<dbReference type="GO" id="GO:0006431">
    <property type="term" value="P:methionyl-tRNA aminoacylation"/>
    <property type="evidence" value="ECO:0007669"/>
    <property type="project" value="UniProtKB-UniRule"/>
</dbReference>
<dbReference type="CDD" id="cd00814">
    <property type="entry name" value="MetRS_core"/>
    <property type="match status" value="1"/>
</dbReference>
<dbReference type="CDD" id="cd02800">
    <property type="entry name" value="tRNA_bind_EcMetRS_like"/>
    <property type="match status" value="1"/>
</dbReference>
<dbReference type="FunFam" id="2.20.28.20:FF:000001">
    <property type="entry name" value="Methionine--tRNA ligase"/>
    <property type="match status" value="1"/>
</dbReference>
<dbReference type="FunFam" id="2.40.50.140:FF:000042">
    <property type="entry name" value="Methionine--tRNA ligase"/>
    <property type="match status" value="1"/>
</dbReference>
<dbReference type="Gene3D" id="3.40.50.620">
    <property type="entry name" value="HUPs"/>
    <property type="match status" value="1"/>
</dbReference>
<dbReference type="Gene3D" id="1.10.730.10">
    <property type="entry name" value="Isoleucyl-tRNA Synthetase, Domain 1"/>
    <property type="match status" value="1"/>
</dbReference>
<dbReference type="Gene3D" id="2.20.28.20">
    <property type="entry name" value="Methionyl-tRNA synthetase, Zn-domain"/>
    <property type="match status" value="1"/>
</dbReference>
<dbReference type="Gene3D" id="2.40.50.140">
    <property type="entry name" value="Nucleic acid-binding proteins"/>
    <property type="match status" value="1"/>
</dbReference>
<dbReference type="HAMAP" id="MF_00098">
    <property type="entry name" value="Met_tRNA_synth_type1"/>
    <property type="match status" value="1"/>
</dbReference>
<dbReference type="InterPro" id="IPR001412">
    <property type="entry name" value="aa-tRNA-synth_I_CS"/>
</dbReference>
<dbReference type="InterPro" id="IPR041872">
    <property type="entry name" value="Anticodon_Met"/>
</dbReference>
<dbReference type="InterPro" id="IPR004495">
    <property type="entry name" value="Met-tRNA-synth_bsu_C"/>
</dbReference>
<dbReference type="InterPro" id="IPR023458">
    <property type="entry name" value="Met-tRNA_ligase_1"/>
</dbReference>
<dbReference type="InterPro" id="IPR014758">
    <property type="entry name" value="Met-tRNA_synth"/>
</dbReference>
<dbReference type="InterPro" id="IPR015413">
    <property type="entry name" value="Methionyl/Leucyl_tRNA_Synth"/>
</dbReference>
<dbReference type="InterPro" id="IPR033911">
    <property type="entry name" value="MetRS_core"/>
</dbReference>
<dbReference type="InterPro" id="IPR029038">
    <property type="entry name" value="MetRS_Zn"/>
</dbReference>
<dbReference type="InterPro" id="IPR012340">
    <property type="entry name" value="NA-bd_OB-fold"/>
</dbReference>
<dbReference type="InterPro" id="IPR014729">
    <property type="entry name" value="Rossmann-like_a/b/a_fold"/>
</dbReference>
<dbReference type="InterPro" id="IPR002547">
    <property type="entry name" value="tRNA-bd_dom"/>
</dbReference>
<dbReference type="InterPro" id="IPR009080">
    <property type="entry name" value="tRNAsynth_Ia_anticodon-bd"/>
</dbReference>
<dbReference type="NCBIfam" id="TIGR00398">
    <property type="entry name" value="metG"/>
    <property type="match status" value="1"/>
</dbReference>
<dbReference type="NCBIfam" id="TIGR00399">
    <property type="entry name" value="metG_C_term"/>
    <property type="match status" value="1"/>
</dbReference>
<dbReference type="NCBIfam" id="NF001100">
    <property type="entry name" value="PRK00133.1"/>
    <property type="match status" value="1"/>
</dbReference>
<dbReference type="PANTHER" id="PTHR45765">
    <property type="entry name" value="METHIONINE--TRNA LIGASE"/>
    <property type="match status" value="1"/>
</dbReference>
<dbReference type="PANTHER" id="PTHR45765:SF1">
    <property type="entry name" value="METHIONINE--TRNA LIGASE, CYTOPLASMIC"/>
    <property type="match status" value="1"/>
</dbReference>
<dbReference type="Pfam" id="PF19303">
    <property type="entry name" value="Anticodon_3"/>
    <property type="match status" value="1"/>
</dbReference>
<dbReference type="Pfam" id="PF09334">
    <property type="entry name" value="tRNA-synt_1g"/>
    <property type="match status" value="1"/>
</dbReference>
<dbReference type="Pfam" id="PF01588">
    <property type="entry name" value="tRNA_bind"/>
    <property type="match status" value="1"/>
</dbReference>
<dbReference type="PRINTS" id="PR01041">
    <property type="entry name" value="TRNASYNTHMET"/>
</dbReference>
<dbReference type="SUPFAM" id="SSF47323">
    <property type="entry name" value="Anticodon-binding domain of a subclass of class I aminoacyl-tRNA synthetases"/>
    <property type="match status" value="1"/>
</dbReference>
<dbReference type="SUPFAM" id="SSF57770">
    <property type="entry name" value="Methionyl-tRNA synthetase (MetRS), Zn-domain"/>
    <property type="match status" value="1"/>
</dbReference>
<dbReference type="SUPFAM" id="SSF50249">
    <property type="entry name" value="Nucleic acid-binding proteins"/>
    <property type="match status" value="1"/>
</dbReference>
<dbReference type="SUPFAM" id="SSF52374">
    <property type="entry name" value="Nucleotidylyl transferase"/>
    <property type="match status" value="1"/>
</dbReference>
<dbReference type="PROSITE" id="PS00178">
    <property type="entry name" value="AA_TRNA_LIGASE_I"/>
    <property type="match status" value="1"/>
</dbReference>
<dbReference type="PROSITE" id="PS50886">
    <property type="entry name" value="TRBD"/>
    <property type="match status" value="1"/>
</dbReference>
<keyword id="KW-0030">Aminoacyl-tRNA synthetase</keyword>
<keyword id="KW-0067">ATP-binding</keyword>
<keyword id="KW-0963">Cytoplasm</keyword>
<keyword id="KW-0436">Ligase</keyword>
<keyword id="KW-0479">Metal-binding</keyword>
<keyword id="KW-0547">Nucleotide-binding</keyword>
<keyword id="KW-0648">Protein biosynthesis</keyword>
<keyword id="KW-1185">Reference proteome</keyword>
<keyword id="KW-0694">RNA-binding</keyword>
<keyword id="KW-0820">tRNA-binding</keyword>
<keyword id="KW-0862">Zinc</keyword>
<gene>
    <name evidence="1" type="primary">metG</name>
    <name type="ordered locus">LEPBI_I3307</name>
</gene>
<organism>
    <name type="scientific">Leptospira biflexa serovar Patoc (strain Patoc 1 / ATCC 23582 / Paris)</name>
    <dbReference type="NCBI Taxonomy" id="456481"/>
    <lineage>
        <taxon>Bacteria</taxon>
        <taxon>Pseudomonadati</taxon>
        <taxon>Spirochaetota</taxon>
        <taxon>Spirochaetia</taxon>
        <taxon>Leptospirales</taxon>
        <taxon>Leptospiraceae</taxon>
        <taxon>Leptospira</taxon>
    </lineage>
</organism>
<name>SYM_LEPBP</name>
<sequence>MSKHILVTSALPYANGSIHLGHILEAVQTDIWVRFQKLIGNECYFFCADDTHGTPIMIAAKKAGKTPESMIEEVQKEHYKDLTSFGVEYDNYYTTNSEENKKFSESIYLTLKKNGHIVARNIEQSYCEHDKMFLPDRFIKGTCPKCGAKDQYGDSCEVCGTSYSPKDLKDSYCSICGTTPVLRESKHLFFKLQDFQNQLKNWMEEGNRLNEGAQKKLQEWFTSGLQEWDISRDGPYFGFAIPEEENKYFYVWLDAPIGYMASSLNHLKDERKFNEFWKEGKGEIVHFIGKDILYFHGLFWPAMLMGSGYKAPSQLNVHGFLTVNGEKMSKSRGTFINASTFAKYLDVEHFRFYLACRLGSGMEDVDISFDDFVSRVNSDLIGNLVNLVSRVSTSILDKMDRKLGILSTEGKSLVSELLSKETEIREAYVSRNYSKVMRDITGLGDKVNKYVNDYAPWNLIKTDVEKAREVVTTSLNCAKILFTYLAPVTPKIVHSLADLFQIPNLSFLNLTETIENKVLGPYQMLSKRVEEKNITIMITETKETFEKSNPEKAKQDPSKSNTNEVKSATVSEDGFITIDELSKVELRVGLIKEANPVEGADKLLFVKVDLGEKGIKNVFAGIKASYTAEELVGKKVVVVANLKPRQMKFGLSEAMLLASGKDKTLSLFVPDRDASPGDLLK</sequence>